<gene>
    <name evidence="1" type="primary">atpD</name>
    <name type="ordered locus">azo0159</name>
</gene>
<evidence type="ECO:0000255" key="1">
    <source>
        <dbReference type="HAMAP-Rule" id="MF_01347"/>
    </source>
</evidence>
<name>ATPB_AZOSB</name>
<proteinExistence type="inferred from homology"/>
<keyword id="KW-0066">ATP synthesis</keyword>
<keyword id="KW-0067">ATP-binding</keyword>
<keyword id="KW-0997">Cell inner membrane</keyword>
<keyword id="KW-1003">Cell membrane</keyword>
<keyword id="KW-0139">CF(1)</keyword>
<keyword id="KW-0375">Hydrogen ion transport</keyword>
<keyword id="KW-0406">Ion transport</keyword>
<keyword id="KW-0472">Membrane</keyword>
<keyword id="KW-0547">Nucleotide-binding</keyword>
<keyword id="KW-1185">Reference proteome</keyword>
<keyword id="KW-1278">Translocase</keyword>
<keyword id="KW-0813">Transport</keyword>
<organism>
    <name type="scientific">Azoarcus sp. (strain BH72)</name>
    <dbReference type="NCBI Taxonomy" id="418699"/>
    <lineage>
        <taxon>Bacteria</taxon>
        <taxon>Pseudomonadati</taxon>
        <taxon>Pseudomonadota</taxon>
        <taxon>Betaproteobacteria</taxon>
        <taxon>Rhodocyclales</taxon>
        <taxon>Zoogloeaceae</taxon>
        <taxon>Azoarcus</taxon>
    </lineage>
</organism>
<comment type="function">
    <text evidence="1">Produces ATP from ADP in the presence of a proton gradient across the membrane. The catalytic sites are hosted primarily by the beta subunits.</text>
</comment>
<comment type="catalytic activity">
    <reaction evidence="1">
        <text>ATP + H2O + 4 H(+)(in) = ADP + phosphate + 5 H(+)(out)</text>
        <dbReference type="Rhea" id="RHEA:57720"/>
        <dbReference type="ChEBI" id="CHEBI:15377"/>
        <dbReference type="ChEBI" id="CHEBI:15378"/>
        <dbReference type="ChEBI" id="CHEBI:30616"/>
        <dbReference type="ChEBI" id="CHEBI:43474"/>
        <dbReference type="ChEBI" id="CHEBI:456216"/>
        <dbReference type="EC" id="7.1.2.2"/>
    </reaction>
</comment>
<comment type="subunit">
    <text evidence="1">F-type ATPases have 2 components, CF(1) - the catalytic core - and CF(0) - the membrane proton channel. CF(1) has five subunits: alpha(3), beta(3), gamma(1), delta(1), epsilon(1). CF(0) has three main subunits: a(1), b(2) and c(9-12). The alpha and beta chains form an alternating ring which encloses part of the gamma chain. CF(1) is attached to CF(0) by a central stalk formed by the gamma and epsilon chains, while a peripheral stalk is formed by the delta and b chains.</text>
</comment>
<comment type="subcellular location">
    <subcellularLocation>
        <location evidence="1">Cell inner membrane</location>
        <topology evidence="1">Peripheral membrane protein</topology>
    </subcellularLocation>
</comment>
<comment type="similarity">
    <text evidence="1">Belongs to the ATPase alpha/beta chains family.</text>
</comment>
<sequence>MSNGTIVQCIGAVVDIQFPRDSMPKVYDALKLEDAADSFAEAGLTFEVQQQLGDGVVRTIALGSSDGLRRGMKVSNTGKPISVPVGHGTLGRIMDVLGRPIDEAGPVETDELRAIHQKAPKFDELSPSVELLETGIKVIDLICPFAKGGKVGLFGGAGVGKTVNMMELINNIAKQHSGLSVFAGVGERTREGNDFYHEMKDSNVLDKVAMVFGQMNEPPGNRLRVALTGLTMAERFRDEGRDILFFVDNIYRYTLAGTEVSALLGRMPSAVGYQPTLAEEMGRLQERITSTKVGSITSIQAVYVPADDLTDPSPATTFLHLDSTVVLSRDIAALGIYPAVDPLDSTSRQLDPLVVGEEHYSVARAVQQTLQKYKELRDIIAILGMDELSPDDKLAVARARKIQRFLSQPFHVAEVFTGSPGKYVSLKDTIAGFKAIVNGEYDHLPEQAFYMVGGIEEVLEKAKKLQ</sequence>
<accession>A1K1S2</accession>
<protein>
    <recommendedName>
        <fullName evidence="1">ATP synthase subunit beta</fullName>
        <ecNumber evidence="1">7.1.2.2</ecNumber>
    </recommendedName>
    <alternativeName>
        <fullName evidence="1">ATP synthase F1 sector subunit beta</fullName>
    </alternativeName>
    <alternativeName>
        <fullName evidence="1">F-ATPase subunit beta</fullName>
    </alternativeName>
</protein>
<reference key="1">
    <citation type="journal article" date="2006" name="Nat. Biotechnol.">
        <title>Complete genome of the mutualistic, N2-fixing grass endophyte Azoarcus sp. strain BH72.</title>
        <authorList>
            <person name="Krause A."/>
            <person name="Ramakumar A."/>
            <person name="Bartels D."/>
            <person name="Battistoni F."/>
            <person name="Bekel T."/>
            <person name="Boch J."/>
            <person name="Boehm M."/>
            <person name="Friedrich F."/>
            <person name="Hurek T."/>
            <person name="Krause L."/>
            <person name="Linke B."/>
            <person name="McHardy A.C."/>
            <person name="Sarkar A."/>
            <person name="Schneiker S."/>
            <person name="Syed A.A."/>
            <person name="Thauer R."/>
            <person name="Vorhoelter F.-J."/>
            <person name="Weidner S."/>
            <person name="Puehler A."/>
            <person name="Reinhold-Hurek B."/>
            <person name="Kaiser O."/>
            <person name="Goesmann A."/>
        </authorList>
    </citation>
    <scope>NUCLEOTIDE SEQUENCE [LARGE SCALE GENOMIC DNA]</scope>
    <source>
        <strain>BH72</strain>
    </source>
</reference>
<dbReference type="EC" id="7.1.2.2" evidence="1"/>
<dbReference type="EMBL" id="AM406670">
    <property type="protein sequence ID" value="CAL92777.1"/>
    <property type="molecule type" value="Genomic_DNA"/>
</dbReference>
<dbReference type="RefSeq" id="WP_011763895.1">
    <property type="nucleotide sequence ID" value="NC_008702.1"/>
</dbReference>
<dbReference type="SMR" id="A1K1S2"/>
<dbReference type="STRING" id="62928.azo0159"/>
<dbReference type="KEGG" id="aoa:dqs_0168"/>
<dbReference type="KEGG" id="azo:azo0159"/>
<dbReference type="eggNOG" id="COG0055">
    <property type="taxonomic scope" value="Bacteria"/>
</dbReference>
<dbReference type="HOGENOM" id="CLU_022398_0_2_4"/>
<dbReference type="OrthoDB" id="9801639at2"/>
<dbReference type="Proteomes" id="UP000002588">
    <property type="component" value="Chromosome"/>
</dbReference>
<dbReference type="GO" id="GO:0005886">
    <property type="term" value="C:plasma membrane"/>
    <property type="evidence" value="ECO:0007669"/>
    <property type="project" value="UniProtKB-SubCell"/>
</dbReference>
<dbReference type="GO" id="GO:0045259">
    <property type="term" value="C:proton-transporting ATP synthase complex"/>
    <property type="evidence" value="ECO:0007669"/>
    <property type="project" value="UniProtKB-KW"/>
</dbReference>
<dbReference type="GO" id="GO:0005524">
    <property type="term" value="F:ATP binding"/>
    <property type="evidence" value="ECO:0007669"/>
    <property type="project" value="UniProtKB-UniRule"/>
</dbReference>
<dbReference type="GO" id="GO:0016887">
    <property type="term" value="F:ATP hydrolysis activity"/>
    <property type="evidence" value="ECO:0007669"/>
    <property type="project" value="InterPro"/>
</dbReference>
<dbReference type="GO" id="GO:0046933">
    <property type="term" value="F:proton-transporting ATP synthase activity, rotational mechanism"/>
    <property type="evidence" value="ECO:0007669"/>
    <property type="project" value="UniProtKB-UniRule"/>
</dbReference>
<dbReference type="CDD" id="cd18110">
    <property type="entry name" value="ATP-synt_F1_beta_C"/>
    <property type="match status" value="1"/>
</dbReference>
<dbReference type="CDD" id="cd18115">
    <property type="entry name" value="ATP-synt_F1_beta_N"/>
    <property type="match status" value="1"/>
</dbReference>
<dbReference type="CDD" id="cd01133">
    <property type="entry name" value="F1-ATPase_beta_CD"/>
    <property type="match status" value="1"/>
</dbReference>
<dbReference type="FunFam" id="1.10.1140.10:FF:000001">
    <property type="entry name" value="ATP synthase subunit beta"/>
    <property type="match status" value="1"/>
</dbReference>
<dbReference type="FunFam" id="3.40.50.300:FF:000004">
    <property type="entry name" value="ATP synthase subunit beta"/>
    <property type="match status" value="1"/>
</dbReference>
<dbReference type="Gene3D" id="2.40.10.170">
    <property type="match status" value="1"/>
</dbReference>
<dbReference type="Gene3D" id="1.10.1140.10">
    <property type="entry name" value="Bovine Mitochondrial F1-atpase, Atp Synthase Beta Chain, Chain D, domain 3"/>
    <property type="match status" value="1"/>
</dbReference>
<dbReference type="Gene3D" id="3.40.50.300">
    <property type="entry name" value="P-loop containing nucleotide triphosphate hydrolases"/>
    <property type="match status" value="1"/>
</dbReference>
<dbReference type="HAMAP" id="MF_01347">
    <property type="entry name" value="ATP_synth_beta_bact"/>
    <property type="match status" value="1"/>
</dbReference>
<dbReference type="InterPro" id="IPR003593">
    <property type="entry name" value="AAA+_ATPase"/>
</dbReference>
<dbReference type="InterPro" id="IPR055190">
    <property type="entry name" value="ATP-synt_VA_C"/>
</dbReference>
<dbReference type="InterPro" id="IPR005722">
    <property type="entry name" value="ATP_synth_F1_bsu"/>
</dbReference>
<dbReference type="InterPro" id="IPR020003">
    <property type="entry name" value="ATPase_a/bsu_AS"/>
</dbReference>
<dbReference type="InterPro" id="IPR050053">
    <property type="entry name" value="ATPase_alpha/beta_chains"/>
</dbReference>
<dbReference type="InterPro" id="IPR004100">
    <property type="entry name" value="ATPase_F1/V1/A1_a/bsu_N"/>
</dbReference>
<dbReference type="InterPro" id="IPR036121">
    <property type="entry name" value="ATPase_F1/V1/A1_a/bsu_N_sf"/>
</dbReference>
<dbReference type="InterPro" id="IPR000194">
    <property type="entry name" value="ATPase_F1/V1/A1_a/bsu_nucl-bd"/>
</dbReference>
<dbReference type="InterPro" id="IPR024034">
    <property type="entry name" value="ATPase_F1/V1_b/a_C"/>
</dbReference>
<dbReference type="InterPro" id="IPR027417">
    <property type="entry name" value="P-loop_NTPase"/>
</dbReference>
<dbReference type="NCBIfam" id="TIGR01039">
    <property type="entry name" value="atpD"/>
    <property type="match status" value="1"/>
</dbReference>
<dbReference type="PANTHER" id="PTHR15184">
    <property type="entry name" value="ATP SYNTHASE"/>
    <property type="match status" value="1"/>
</dbReference>
<dbReference type="PANTHER" id="PTHR15184:SF71">
    <property type="entry name" value="ATP SYNTHASE SUBUNIT BETA, MITOCHONDRIAL"/>
    <property type="match status" value="1"/>
</dbReference>
<dbReference type="Pfam" id="PF00006">
    <property type="entry name" value="ATP-synt_ab"/>
    <property type="match status" value="1"/>
</dbReference>
<dbReference type="Pfam" id="PF02874">
    <property type="entry name" value="ATP-synt_ab_N"/>
    <property type="match status" value="1"/>
</dbReference>
<dbReference type="Pfam" id="PF22919">
    <property type="entry name" value="ATP-synt_VA_C"/>
    <property type="match status" value="1"/>
</dbReference>
<dbReference type="SMART" id="SM00382">
    <property type="entry name" value="AAA"/>
    <property type="match status" value="1"/>
</dbReference>
<dbReference type="SUPFAM" id="SSF47917">
    <property type="entry name" value="C-terminal domain of alpha and beta subunits of F1 ATP synthase"/>
    <property type="match status" value="1"/>
</dbReference>
<dbReference type="SUPFAM" id="SSF50615">
    <property type="entry name" value="N-terminal domain of alpha and beta subunits of F1 ATP synthase"/>
    <property type="match status" value="1"/>
</dbReference>
<dbReference type="SUPFAM" id="SSF52540">
    <property type="entry name" value="P-loop containing nucleoside triphosphate hydrolases"/>
    <property type="match status" value="1"/>
</dbReference>
<dbReference type="PROSITE" id="PS00152">
    <property type="entry name" value="ATPASE_ALPHA_BETA"/>
    <property type="match status" value="1"/>
</dbReference>
<feature type="chain" id="PRO_1000055093" description="ATP synthase subunit beta">
    <location>
        <begin position="1"/>
        <end position="466"/>
    </location>
</feature>
<feature type="binding site" evidence="1">
    <location>
        <begin position="155"/>
        <end position="162"/>
    </location>
    <ligand>
        <name>ATP</name>
        <dbReference type="ChEBI" id="CHEBI:30616"/>
    </ligand>
</feature>